<dbReference type="EMBL" id="AF251687">
    <property type="protein sequence ID" value="AAL55709.1"/>
    <property type="molecule type" value="mRNA"/>
</dbReference>
<dbReference type="EMBL" id="AF013465">
    <property type="protein sequence ID" value="AAB72192.1"/>
    <property type="status" value="ALT_FRAME"/>
    <property type="molecule type" value="Genomic_DNA"/>
</dbReference>
<dbReference type="EMBL" id="AF027732">
    <property type="status" value="NOT_ANNOTATED_CDS"/>
    <property type="molecule type" value="mRNA"/>
</dbReference>
<dbReference type="EMBL" id="AC011622">
    <property type="protein sequence ID" value="AAG52418.1"/>
    <property type="molecule type" value="Genomic_DNA"/>
</dbReference>
<dbReference type="EMBL" id="CP002684">
    <property type="protein sequence ID" value="AEE34124.1"/>
    <property type="molecule type" value="Genomic_DNA"/>
</dbReference>
<dbReference type="EMBL" id="CP002684">
    <property type="protein sequence ID" value="AEE34125.1"/>
    <property type="molecule type" value="Genomic_DNA"/>
</dbReference>
<dbReference type="EMBL" id="CP002684">
    <property type="protein sequence ID" value="AEE34126.1"/>
    <property type="molecule type" value="Genomic_DNA"/>
</dbReference>
<dbReference type="PIR" id="D96661">
    <property type="entry name" value="D96661"/>
</dbReference>
<dbReference type="RefSeq" id="NP_001185302.1">
    <property type="nucleotide sequence ID" value="NM_001198373.2"/>
</dbReference>
<dbReference type="RefSeq" id="NP_176552.1">
    <property type="nucleotide sequence ID" value="NM_105042.5"/>
</dbReference>
<dbReference type="RefSeq" id="NP_974080.1">
    <property type="nucleotide sequence ID" value="NM_202351.2"/>
</dbReference>
<dbReference type="PDB" id="7FDL">
    <property type="method" value="X-ray"/>
    <property type="resolution" value="2.90 A"/>
    <property type="chains" value="A/C/E/G/I/K=8-205"/>
</dbReference>
<dbReference type="PDB" id="7FDN">
    <property type="method" value="X-ray"/>
    <property type="resolution" value="1.90 A"/>
    <property type="chains" value="A/B=8-205"/>
</dbReference>
<dbReference type="PDB" id="7FDO">
    <property type="method" value="X-ray"/>
    <property type="resolution" value="1.75 A"/>
    <property type="chains" value="A=8-205"/>
</dbReference>
<dbReference type="PDBsum" id="7FDL"/>
<dbReference type="PDBsum" id="7FDN"/>
<dbReference type="PDBsum" id="7FDO"/>
<dbReference type="SMR" id="Q9CAD0"/>
<dbReference type="BioGRID" id="27890">
    <property type="interactions" value="21"/>
</dbReference>
<dbReference type="FunCoup" id="Q9CAD0">
    <property type="interactions" value="315"/>
</dbReference>
<dbReference type="IntAct" id="Q9CAD0">
    <property type="interactions" value="18"/>
</dbReference>
<dbReference type="STRING" id="3702.Q9CAD0"/>
<dbReference type="PaxDb" id="3702-AT1G63650.3"/>
<dbReference type="EnsemblPlants" id="AT1G63650.1">
    <property type="protein sequence ID" value="AT1G63650.1"/>
    <property type="gene ID" value="AT1G63650"/>
</dbReference>
<dbReference type="EnsemblPlants" id="AT1G63650.2">
    <property type="protein sequence ID" value="AT1G63650.2"/>
    <property type="gene ID" value="AT1G63650"/>
</dbReference>
<dbReference type="EnsemblPlants" id="AT1G63650.3">
    <property type="protein sequence ID" value="AT1G63650.3"/>
    <property type="gene ID" value="AT1G63650"/>
</dbReference>
<dbReference type="GeneID" id="842669"/>
<dbReference type="Gramene" id="AT1G63650.1">
    <property type="protein sequence ID" value="AT1G63650.1"/>
    <property type="gene ID" value="AT1G63650"/>
</dbReference>
<dbReference type="Gramene" id="AT1G63650.2">
    <property type="protein sequence ID" value="AT1G63650.2"/>
    <property type="gene ID" value="AT1G63650"/>
</dbReference>
<dbReference type="Gramene" id="AT1G63650.3">
    <property type="protein sequence ID" value="AT1G63650.3"/>
    <property type="gene ID" value="AT1G63650"/>
</dbReference>
<dbReference type="KEGG" id="ath:AT1G63650"/>
<dbReference type="Araport" id="AT1G63650"/>
<dbReference type="TAIR" id="AT1G63650">
    <property type="gene designation" value="EGL3"/>
</dbReference>
<dbReference type="eggNOG" id="ENOG502QT7W">
    <property type="taxonomic scope" value="Eukaryota"/>
</dbReference>
<dbReference type="HOGENOM" id="CLU_023211_1_1_1"/>
<dbReference type="InParanoid" id="Q9CAD0"/>
<dbReference type="OMA" id="ELNNCVH"/>
<dbReference type="OrthoDB" id="690068at2759"/>
<dbReference type="PhylomeDB" id="Q9CAD0"/>
<dbReference type="PRO" id="PR:Q9CAD0"/>
<dbReference type="Proteomes" id="UP000006548">
    <property type="component" value="Chromosome 1"/>
</dbReference>
<dbReference type="ExpressionAtlas" id="Q9CAD0">
    <property type="expression patterns" value="baseline and differential"/>
</dbReference>
<dbReference type="GO" id="GO:0005634">
    <property type="term" value="C:nucleus"/>
    <property type="evidence" value="ECO:0000314"/>
    <property type="project" value="TAIR"/>
</dbReference>
<dbReference type="GO" id="GO:0003677">
    <property type="term" value="F:DNA binding"/>
    <property type="evidence" value="ECO:0007669"/>
    <property type="project" value="UniProtKB-KW"/>
</dbReference>
<dbReference type="GO" id="GO:0003700">
    <property type="term" value="F:DNA-binding transcription factor activity"/>
    <property type="evidence" value="ECO:0000250"/>
    <property type="project" value="TAIR"/>
</dbReference>
<dbReference type="GO" id="GO:0046983">
    <property type="term" value="F:protein dimerization activity"/>
    <property type="evidence" value="ECO:0007669"/>
    <property type="project" value="InterPro"/>
</dbReference>
<dbReference type="GO" id="GO:0009957">
    <property type="term" value="P:epidermal cell fate specification"/>
    <property type="evidence" value="ECO:0000315"/>
    <property type="project" value="TAIR"/>
</dbReference>
<dbReference type="GO" id="GO:0009867">
    <property type="term" value="P:jasmonic acid mediated signaling pathway"/>
    <property type="evidence" value="ECO:0000315"/>
    <property type="project" value="TAIR"/>
</dbReference>
<dbReference type="GO" id="GO:0006355">
    <property type="term" value="P:regulation of DNA-templated transcription"/>
    <property type="evidence" value="ECO:0000304"/>
    <property type="project" value="TAIR"/>
</dbReference>
<dbReference type="GO" id="GO:0010026">
    <property type="term" value="P:trichome differentiation"/>
    <property type="evidence" value="ECO:0000315"/>
    <property type="project" value="TAIR"/>
</dbReference>
<dbReference type="CDD" id="cd11451">
    <property type="entry name" value="bHLH_AtTT8_like"/>
    <property type="match status" value="1"/>
</dbReference>
<dbReference type="FunFam" id="4.10.280.10:FF:000125">
    <property type="entry name" value="Transcription factor EGL1"/>
    <property type="match status" value="1"/>
</dbReference>
<dbReference type="Gene3D" id="4.10.280.10">
    <property type="entry name" value="Helix-loop-helix DNA-binding domain"/>
    <property type="match status" value="1"/>
</dbReference>
<dbReference type="InterPro" id="IPR054502">
    <property type="entry name" value="bHLH-TF_ACT-like_plant"/>
</dbReference>
<dbReference type="InterPro" id="IPR011598">
    <property type="entry name" value="bHLH_dom"/>
</dbReference>
<dbReference type="InterPro" id="IPR036638">
    <property type="entry name" value="HLH_DNA-bd_sf"/>
</dbReference>
<dbReference type="InterPro" id="IPR025610">
    <property type="entry name" value="MYC/MYB_N"/>
</dbReference>
<dbReference type="PANTHER" id="PTHR46266:SF3">
    <property type="entry name" value="TRANSCRIPTION FACTOR EGL1"/>
    <property type="match status" value="1"/>
</dbReference>
<dbReference type="PANTHER" id="PTHR46266">
    <property type="entry name" value="TRANSCRIPTION FACTOR TT8"/>
    <property type="match status" value="1"/>
</dbReference>
<dbReference type="Pfam" id="PF14215">
    <property type="entry name" value="bHLH-MYC_N"/>
    <property type="match status" value="1"/>
</dbReference>
<dbReference type="Pfam" id="PF22754">
    <property type="entry name" value="bHLH-TF_ACT-like_plant"/>
    <property type="match status" value="1"/>
</dbReference>
<dbReference type="Pfam" id="PF00010">
    <property type="entry name" value="HLH"/>
    <property type="match status" value="1"/>
</dbReference>
<dbReference type="SMART" id="SM00353">
    <property type="entry name" value="HLH"/>
    <property type="match status" value="1"/>
</dbReference>
<dbReference type="SUPFAM" id="SSF47459">
    <property type="entry name" value="HLH, helix-loop-helix DNA-binding domain"/>
    <property type="match status" value="1"/>
</dbReference>
<dbReference type="PROSITE" id="PS50888">
    <property type="entry name" value="BHLH"/>
    <property type="match status" value="1"/>
</dbReference>
<feature type="chain" id="PRO_0000127426" description="Transcription factor EGL1">
    <location>
        <begin position="1"/>
        <end position="596"/>
    </location>
</feature>
<feature type="domain" description="bHLH" evidence="2">
    <location>
        <begin position="401"/>
        <end position="450"/>
    </location>
</feature>
<feature type="sequence conflict" description="In Ref. 2; AAB72192." evidence="9" ref="2">
    <original>Q</original>
    <variation>Y</variation>
    <location>
        <position position="248"/>
    </location>
</feature>
<feature type="helix" evidence="11">
    <location>
        <begin position="13"/>
        <end position="24"/>
    </location>
</feature>
<feature type="strand" evidence="11">
    <location>
        <begin position="27"/>
        <end position="34"/>
    </location>
</feature>
<feature type="strand" evidence="11">
    <location>
        <begin position="36"/>
        <end position="38"/>
    </location>
</feature>
<feature type="strand" evidence="11">
    <location>
        <begin position="42"/>
        <end position="49"/>
    </location>
</feature>
<feature type="helix" evidence="11">
    <location>
        <begin position="72"/>
        <end position="84"/>
    </location>
</feature>
<feature type="helix" evidence="11">
    <location>
        <begin position="108"/>
        <end position="110"/>
    </location>
</feature>
<feature type="helix" evidence="11">
    <location>
        <begin position="113"/>
        <end position="121"/>
    </location>
</feature>
<feature type="strand" evidence="10">
    <location>
        <begin position="125"/>
        <end position="127"/>
    </location>
</feature>
<feature type="helix" evidence="11">
    <location>
        <begin position="131"/>
        <end position="139"/>
    </location>
</feature>
<feature type="strand" evidence="11">
    <location>
        <begin position="143"/>
        <end position="147"/>
    </location>
</feature>
<feature type="helix" evidence="11">
    <location>
        <begin position="148"/>
        <end position="150"/>
    </location>
</feature>
<feature type="turn" evidence="11">
    <location>
        <begin position="153"/>
        <end position="155"/>
    </location>
</feature>
<feature type="helix" evidence="11">
    <location>
        <begin position="159"/>
        <end position="164"/>
    </location>
</feature>
<feature type="strand" evidence="11">
    <location>
        <begin position="169"/>
        <end position="175"/>
    </location>
</feature>
<feature type="strand" evidence="11">
    <location>
        <begin position="178"/>
        <end position="186"/>
    </location>
</feature>
<feature type="helix" evidence="11">
    <location>
        <begin position="192"/>
        <end position="202"/>
    </location>
</feature>
<organism>
    <name type="scientific">Arabidopsis thaliana</name>
    <name type="common">Mouse-ear cress</name>
    <dbReference type="NCBI Taxonomy" id="3702"/>
    <lineage>
        <taxon>Eukaryota</taxon>
        <taxon>Viridiplantae</taxon>
        <taxon>Streptophyta</taxon>
        <taxon>Embryophyta</taxon>
        <taxon>Tracheophyta</taxon>
        <taxon>Spermatophyta</taxon>
        <taxon>Magnoliopsida</taxon>
        <taxon>eudicotyledons</taxon>
        <taxon>Gunneridae</taxon>
        <taxon>Pentapetalae</taxon>
        <taxon>rosids</taxon>
        <taxon>malvids</taxon>
        <taxon>Brassicales</taxon>
        <taxon>Brassicaceae</taxon>
        <taxon>Camelineae</taxon>
        <taxon>Arabidopsis</taxon>
    </lineage>
</organism>
<comment type="function">
    <text evidence="4 5 6 7 8">Transcription activator, when associated with MYB75/PAP1, MYB90/PAP2 or TT2. Involved in epidermal cell fate specification. Negatively regulates stomata formation but promotes trichome formation. Together with MYB66/WER, promotes the formation of non-hair cells in root epidermis cells in the N position. Whereas together with CPC, promotes the formation of hair cells in root epidermis cells in the H position by inhibiting non-hair cell formation. Also seems to play a role in the activation of anthocyanin biosynthesis, probably together with MYB75/PAP1. Involved in seed mucilage production. Activates the transcription of GL2.</text>
</comment>
<comment type="subunit">
    <text evidence="1 4 6 7">Efficient DNA binding requires dimerization with another bHLH protein (By similarity). Homodimer and heterodimer with GL3. Interacts with CPC, MYB0/GL1, MYB5, MYB23, MYB113, MYB114, MYB75/PAP1, MYB90/PAP2, TT2, TRY, TTG1 and MYB66/WER.</text>
</comment>
<comment type="interaction">
    <interactant intactId="EBI-533398">
        <id>Q9CAD0</id>
    </interactant>
    <interactant intactId="EBI-533386">
        <id>O22059</id>
        <label>CPC</label>
    </interactant>
    <organismsDiffer>false</organismsDiffer>
    <experiments>3</experiments>
</comment>
<comment type="interaction">
    <interactant intactId="EBI-533398">
        <id>Q9CAD0</id>
    </interactant>
    <interactant intactId="EBI-1545177">
        <id>Q9FE25</id>
        <label>MYB75</label>
    </interactant>
    <organismsDiffer>false</organismsDiffer>
    <experiments>5</experiments>
</comment>
<comment type="interaction">
    <interactant intactId="EBI-533398">
        <id>Q9CAD0</id>
    </interactant>
    <interactant intactId="EBI-1545203">
        <id>Q9ZTC3</id>
        <label>MYB90</label>
    </interactant>
    <organismsDiffer>false</organismsDiffer>
    <experiments>3</experiments>
</comment>
<comment type="interaction">
    <interactant intactId="EBI-533398">
        <id>Q9CAD0</id>
    </interactant>
    <interactant intactId="EBI-533373">
        <id>Q9SEI0</id>
        <label>WER</label>
    </interactant>
    <organismsDiffer>false</organismsDiffer>
    <experiments>4</experiments>
</comment>
<comment type="subcellular location">
    <subcellularLocation>
        <location evidence="9">Nucleus</location>
    </subcellularLocation>
    <text evidence="1">Moves from developing hair cells (trichoblasts) to developing non-hair cells (atrichoblasts).</text>
</comment>
<comment type="tissue specificity">
    <text evidence="5 6 8">Ubiquitous with higher levels in buds and flowers. Specifically localized in developing root hair cells. Expressed in epidermal root hair cells (trichoblasts) and moves to root hairless cells (atrichoblasts) by a cell-to-cell movement through plasmodesmata (at protein level).</text>
</comment>
<comment type="developmental stage">
    <text evidence="4">Localized in trichome developing region of leaves, prior to trichome initiation. Levels increase in initiating and young trichome cells, but dropped in the pavement cells between trichomes. Disappears in mature trichomes.</text>
</comment>
<comment type="induction">
    <text evidence="3 8">By UV treatment. Negatively regulated by MYB66/WER, GL3 and BHLH2 in the developing non-hair cells, and positively regulated by CPC and TRY in the developing hair cells.</text>
</comment>
<comment type="sequence caution" evidence="9">
    <conflict type="frameshift">
        <sequence resource="EMBL-CDS" id="AAB72192"/>
    </conflict>
</comment>
<keyword id="KW-0002">3D-structure</keyword>
<keyword id="KW-0010">Activator</keyword>
<keyword id="KW-0217">Developmental protein</keyword>
<keyword id="KW-0238">DNA-binding</keyword>
<keyword id="KW-0539">Nucleus</keyword>
<keyword id="KW-1185">Reference proteome</keyword>
<keyword id="KW-0804">Transcription</keyword>
<keyword id="KW-0805">Transcription regulation</keyword>
<sequence>MATGENRTVPDNLKKQLAVSVRNIQWSYGIFWSVSASQPGVLEWGDGYYNGDIKTRKTIQAAEVKIDQLGLERSEQLRELYESLSLAESSASGSSQVTRRASAAALSPEDLTDTEWYYLVCMSFVFNIGEGIPGGALSNGEPIWLCNAETADSKVFTRSLLAKSASLQTVVCFPFLGGVLEIGTTEHIKEDMNVIQSVKTLFLEAPPYTTISTRSDYQEIFDPLSDDKYTPVFITEAFPTTSTSGFEQEPEDHDSFINDGGASQVQSWQFVGEEISNCIHQSLNSSDCVSQTFVGTTGRLACDPRKSRIQRLGQIQEQSNHVNMDDDVHYQGVISTIFKTTHQLILGPQFQNFDKRSSFTRWKRSSSVKTLGEKSQKMIKKILFEVPLMNKKEELLPDTPEETGNHALSEKKRREKLNERFMTLRSIIPSISKIDKVSILDDTIEYLQDLQKRVQELESCRESADTETRITMMKRKKPDDEEERASANCMNSKRKGSDVNVGEDEPADIGYAGLTDNLRISSLGNEVVIELRCAWREGILLEIMDVISDLNLDSHSVQSSTGDGLLCLTVNCKHKGTKIATTGMIQEALQRVAWIC</sequence>
<evidence type="ECO:0000250" key="1"/>
<evidence type="ECO:0000255" key="2">
    <source>
        <dbReference type="PROSITE-ProRule" id="PRU00981"/>
    </source>
</evidence>
<evidence type="ECO:0000269" key="3">
    <source>
    </source>
</evidence>
<evidence type="ECO:0000269" key="4">
    <source>
    </source>
</evidence>
<evidence type="ECO:0000269" key="5">
    <source>
    </source>
</evidence>
<evidence type="ECO:0000269" key="6">
    <source>
    </source>
</evidence>
<evidence type="ECO:0000269" key="7">
    <source>
    </source>
</evidence>
<evidence type="ECO:0000269" key="8">
    <source>
    </source>
</evidence>
<evidence type="ECO:0000305" key="9"/>
<evidence type="ECO:0007829" key="10">
    <source>
        <dbReference type="PDB" id="7FDN"/>
    </source>
</evidence>
<evidence type="ECO:0007829" key="11">
    <source>
        <dbReference type="PDB" id="7FDO"/>
    </source>
</evidence>
<protein>
    <recommendedName>
        <fullName>Transcription factor EGL1</fullName>
    </recommendedName>
    <alternativeName>
        <fullName>Basic helix-loop-helix protein 2</fullName>
        <shortName>AtMYC146</shortName>
        <shortName>AtbHLH2</shortName>
        <shortName>bHLH 2</shortName>
    </alternativeName>
    <alternativeName>
        <fullName>Protein ENHANCER OF GLABRA 3</fullName>
    </alternativeName>
    <alternativeName>
        <fullName>Transcription factor EN 30</fullName>
    </alternativeName>
    <alternativeName>
        <fullName>bHLH transcription factor bHLH002</fullName>
    </alternativeName>
</protein>
<accession>Q9CAD0</accession>
<accession>O22418</accession>
<name>EGL1_ARATH</name>
<proteinExistence type="evidence at protein level"/>
<reference key="1">
    <citation type="journal article" date="2003" name="Mol. Biol. Evol.">
        <title>The basic helix-loop-helix transcription factor family in plants: a genome-wide study of protein structure and functional diversity.</title>
        <authorList>
            <person name="Heim M.A."/>
            <person name="Jakoby M."/>
            <person name="Werber M."/>
            <person name="Martin C."/>
            <person name="Weisshaar B."/>
            <person name="Bailey P.C."/>
        </authorList>
    </citation>
    <scope>NUCLEOTIDE SEQUENCE [MRNA]</scope>
    <scope>INDUCTION BY UV LIGHT</scope>
    <scope>GENE FAMILY</scope>
    <scope>NOMENCLATURE</scope>
    <source>
        <strain>cv. Columbia</strain>
    </source>
</reference>
<reference key="2">
    <citation type="online journal article" date="1997" name="Plant Gene Register">
        <title>An Arabidopsis Myc-like gene (MYC-146) with homology to the anthocyanin regulatory gene Delila.</title>
        <authorList>
            <person name="Bate N.J."/>
            <person name="Rothstein S.J."/>
        </authorList>
        <locator>PGR97-140</locator>
    </citation>
    <scope>NUCLEOTIDE SEQUENCE [GENOMIC DNA]</scope>
    <source>
        <strain>cv. Columbia</strain>
    </source>
</reference>
<reference key="3">
    <citation type="submission" date="1997-10" db="EMBL/GenBank/DDBJ databases">
        <authorList>
            <person name="Lloyd A.M."/>
            <person name="Zhang F."/>
        </authorList>
    </citation>
    <scope>NUCLEOTIDE SEQUENCE [MRNA]</scope>
    <source>
        <strain>cv. Columbia</strain>
    </source>
</reference>
<reference key="4">
    <citation type="journal article" date="2000" name="Nature">
        <title>Sequence and analysis of chromosome 1 of the plant Arabidopsis thaliana.</title>
        <authorList>
            <person name="Theologis A."/>
            <person name="Ecker J.R."/>
            <person name="Palm C.J."/>
            <person name="Federspiel N.A."/>
            <person name="Kaul S."/>
            <person name="White O."/>
            <person name="Alonso J."/>
            <person name="Altafi H."/>
            <person name="Araujo R."/>
            <person name="Bowman C.L."/>
            <person name="Brooks S.Y."/>
            <person name="Buehler E."/>
            <person name="Chan A."/>
            <person name="Chao Q."/>
            <person name="Chen H."/>
            <person name="Cheuk R.F."/>
            <person name="Chin C.W."/>
            <person name="Chung M.K."/>
            <person name="Conn L."/>
            <person name="Conway A.B."/>
            <person name="Conway A.R."/>
            <person name="Creasy T.H."/>
            <person name="Dewar K."/>
            <person name="Dunn P."/>
            <person name="Etgu P."/>
            <person name="Feldblyum T.V."/>
            <person name="Feng J.-D."/>
            <person name="Fong B."/>
            <person name="Fujii C.Y."/>
            <person name="Gill J.E."/>
            <person name="Goldsmith A.D."/>
            <person name="Haas B."/>
            <person name="Hansen N.F."/>
            <person name="Hughes B."/>
            <person name="Huizar L."/>
            <person name="Hunter J.L."/>
            <person name="Jenkins J."/>
            <person name="Johnson-Hopson C."/>
            <person name="Khan S."/>
            <person name="Khaykin E."/>
            <person name="Kim C.J."/>
            <person name="Koo H.L."/>
            <person name="Kremenetskaia I."/>
            <person name="Kurtz D.B."/>
            <person name="Kwan A."/>
            <person name="Lam B."/>
            <person name="Langin-Hooper S."/>
            <person name="Lee A."/>
            <person name="Lee J.M."/>
            <person name="Lenz C.A."/>
            <person name="Li J.H."/>
            <person name="Li Y.-P."/>
            <person name="Lin X."/>
            <person name="Liu S.X."/>
            <person name="Liu Z.A."/>
            <person name="Luros J.S."/>
            <person name="Maiti R."/>
            <person name="Marziali A."/>
            <person name="Militscher J."/>
            <person name="Miranda M."/>
            <person name="Nguyen M."/>
            <person name="Nierman W.C."/>
            <person name="Osborne B.I."/>
            <person name="Pai G."/>
            <person name="Peterson J."/>
            <person name="Pham P.K."/>
            <person name="Rizzo M."/>
            <person name="Rooney T."/>
            <person name="Rowley D."/>
            <person name="Sakano H."/>
            <person name="Salzberg S.L."/>
            <person name="Schwartz J.R."/>
            <person name="Shinn P."/>
            <person name="Southwick A.M."/>
            <person name="Sun H."/>
            <person name="Tallon L.J."/>
            <person name="Tambunga G."/>
            <person name="Toriumi M.J."/>
            <person name="Town C.D."/>
            <person name="Utterback T."/>
            <person name="Van Aken S."/>
            <person name="Vaysberg M."/>
            <person name="Vysotskaia V.S."/>
            <person name="Walker M."/>
            <person name="Wu D."/>
            <person name="Yu G."/>
            <person name="Fraser C.M."/>
            <person name="Venter J.C."/>
            <person name="Davis R.W."/>
        </authorList>
    </citation>
    <scope>NUCLEOTIDE SEQUENCE [LARGE SCALE GENOMIC DNA]</scope>
    <source>
        <strain>cv. Columbia</strain>
    </source>
</reference>
<reference key="5">
    <citation type="journal article" date="2017" name="Plant J.">
        <title>Araport11: a complete reannotation of the Arabidopsis thaliana reference genome.</title>
        <authorList>
            <person name="Cheng C.Y."/>
            <person name="Krishnakumar V."/>
            <person name="Chan A.P."/>
            <person name="Thibaud-Nissen F."/>
            <person name="Schobel S."/>
            <person name="Town C.D."/>
        </authorList>
    </citation>
    <scope>GENOME REANNOTATION</scope>
    <source>
        <strain>cv. Columbia</strain>
    </source>
</reference>
<reference key="6">
    <citation type="journal article" date="2003" name="Development">
        <title>A network of redundant bHLH proteins functions in all TTG1-dependent pathways of Arabidopsis.</title>
        <authorList>
            <person name="Zhang F."/>
            <person name="Gonzalez A."/>
            <person name="Zhao M."/>
            <person name="Payne C.T."/>
            <person name="Lloyd A.M."/>
        </authorList>
    </citation>
    <scope>FUNCTION</scope>
    <scope>DEVELOPMENTAL STAGE</scope>
    <scope>HOMODIMERIZATION</scope>
    <scope>INTERACTION WITH CPC; GL3; MYB0; MYB75; MYB90; TRY AND TTG1</scope>
</reference>
<reference key="7">
    <citation type="journal article" date="2003" name="Development">
        <title>The bHLH genes GLABRA3 (GL3) and ENHANCER OF GLABRA3 (EGL3) specify epidermal cell fate in the Arabidopsis root.</title>
        <authorList>
            <person name="Bernhardt C."/>
            <person name="Lee M.M."/>
            <person name="Gonzalez A."/>
            <person name="Zhang F."/>
            <person name="Lloyd A.M."/>
            <person name="Schiefelbein J."/>
        </authorList>
    </citation>
    <scope>FUNCTION</scope>
    <scope>INTERACTION WITH CPC AND MYB66</scope>
    <scope>TISSUE SPECIFICITY</scope>
</reference>
<reference key="8">
    <citation type="journal article" date="2003" name="Plant Cell">
        <title>The Arabidopsis basic/helix-loop-helix transcription factor family.</title>
        <authorList>
            <person name="Toledo-Ortiz G."/>
            <person name="Huq E."/>
            <person name="Quail P.H."/>
        </authorList>
    </citation>
    <scope>GENE FAMILY</scope>
</reference>
<reference key="9">
    <citation type="journal article" date="2003" name="Plant Cell">
        <title>Update on the basic helix-loop-helix transcription factor gene family in Arabidopsis thaliana.</title>
        <authorList>
            <person name="Bailey P.C."/>
            <person name="Martin C."/>
            <person name="Toledo-Ortiz G."/>
            <person name="Quail P.H."/>
            <person name="Huq E."/>
            <person name="Heim M.A."/>
            <person name="Jakoby M."/>
            <person name="Werber M."/>
            <person name="Weisshaar B."/>
        </authorList>
    </citation>
    <scope>GENE FAMILY</scope>
    <scope>NOMENCLATURE</scope>
</reference>
<reference key="10">
    <citation type="journal article" date="2003" name="Plant Mol. Biol.">
        <title>Two basic-helix-loop-helix genes (MYC-146 and GL3) from Arabidopsis can activate anthocyanin biosynthesis in a white-flowered Matthiola incana mutant.</title>
        <authorList>
            <person name="Ramsay N.A."/>
            <person name="Walker A.R."/>
            <person name="Mooney M."/>
            <person name="Gray J.C."/>
        </authorList>
    </citation>
    <scope>FUNCTION</scope>
    <scope>TISSUE SPECIFICITY</scope>
</reference>
<reference key="11">
    <citation type="journal article" date="2004" name="Plant J.">
        <title>Comprehensive identification of Arabidopsis thaliana MYB transcription factors interacting with R/B-like BHLH proteins.</title>
        <authorList>
            <person name="Zimmermann I.M."/>
            <person name="Heim M.A."/>
            <person name="Weisshaar B."/>
            <person name="Uhrig J.F."/>
        </authorList>
    </citation>
    <scope>FUNCTION</scope>
    <scope>INTERACTION WITH MYB75; MYB90; MYB5; MYB23; MYB113; MYB114; TT2; MYB0/GL1 AND MYB66/WER</scope>
</reference>
<reference key="12">
    <citation type="journal article" date="2005" name="Development">
        <title>The bHLH genes GL3 and EGL3 participate in an intercellular regulatory circuit that controls cell patterning in the Arabidopsis root epidermis.</title>
        <authorList>
            <person name="Bernhardt C."/>
            <person name="Zhao M."/>
            <person name="Gonzalez A."/>
            <person name="Lloyd A."/>
            <person name="Schiefelbein J."/>
        </authorList>
    </citation>
    <scope>FUNCTION</scope>
    <scope>TISSUE SPECIFICITY</scope>
    <scope>INDUCTION</scope>
</reference>
<gene>
    <name type="primary">BHLH2</name>
    <name type="synonym">EGL1</name>
    <name type="synonym">EGL3</name>
    <name type="synonym">EN30</name>
    <name type="synonym">MYC146</name>
    <name type="ordered locus">At1g63650</name>
    <name type="ORF">F24D7.16</name>
</gene>